<dbReference type="EMBL" id="AF102884">
    <property type="protein sequence ID" value="AAC97510.1"/>
    <property type="molecule type" value="Genomic_RNA"/>
</dbReference>
<dbReference type="RefSeq" id="NP_048060.1">
    <property type="nucleotide sequence ID" value="NC_001990.1"/>
</dbReference>
<dbReference type="SMR" id="Q9YRB2"/>
<dbReference type="GeneID" id="1450471"/>
<dbReference type="KEGG" id="vg:1450471"/>
<dbReference type="Proteomes" id="UP000000831">
    <property type="component" value="Segment"/>
</dbReference>
<dbReference type="GO" id="GO:0039619">
    <property type="term" value="C:T=4 icosahedral viral capsid"/>
    <property type="evidence" value="ECO:0007669"/>
    <property type="project" value="UniProtKB-KW"/>
</dbReference>
<dbReference type="Gene3D" id="2.60.120.20">
    <property type="match status" value="2"/>
</dbReference>
<dbReference type="InterPro" id="IPR005313">
    <property type="entry name" value="Peptidase_N2"/>
</dbReference>
<dbReference type="InterPro" id="IPR029053">
    <property type="entry name" value="Viral_coat"/>
</dbReference>
<dbReference type="Pfam" id="PF03566">
    <property type="entry name" value="Peptidase_A21"/>
    <property type="match status" value="1"/>
</dbReference>
<dbReference type="PIRSF" id="PIRSF007212">
    <property type="entry name" value="Peptidase_A21"/>
    <property type="match status" value="1"/>
</dbReference>
<dbReference type="SUPFAM" id="SSF88633">
    <property type="entry name" value="Positive stranded ssRNA viruses"/>
    <property type="match status" value="1"/>
</dbReference>
<proteinExistence type="inferred from homology"/>
<accession>Q9YRB2</accession>
<keyword id="KW-0167">Capsid protein</keyword>
<keyword id="KW-1185">Reference proteome</keyword>
<keyword id="KW-1144">T=4 icosahedral capsid protein</keyword>
<keyword id="KW-0946">Virion</keyword>
<sequence length="612" mass="66406">MDANVQIRPARNNPSQGNQGRNNNNKRRRRRRGLKLPPVVAPITSPGQMAEPANHANTRVNRGRTRVRGLRQAMMESPMAATSEAWIHDYLDPDGEYKTSLDDGKIPDGAIPQSTCGQFRGTVGARYPGLNSTTLPLDGGTWPLLVMHLPFFRHPLLFITTTSNTEVEVTNADLDAFANDWNNRTDWTEATYPSWAQVGNVFYMVVPTEALTDVPPPTQLGVSGLLESYRLTSSGVTAYFNAPTLVNQGVAVIAQFQPDKEHQKENPDIVAGTTQTGGTLQLGGSGPNYTLTMTIGDQVEFGGAAIPLPTVSMGPMPESGQLVFQTANLTFDVGNTITITTTLPPGSVTGMWQFTASNGTDTVTVDAGARLYAFGANLDASELNLQDINSIKIPPTNMNQMMQATPKTIQFQLNETKGFYMPLRAFQPVFEMTMATSYGPVRWKTPRTTVVDYHRAIGGLQDTIDSNFAIGVAAMTGMSTSTVPYFKVFRRFEAIPAEGSPWGPFASATPPKDDVALTVARTWTDLHPFAYPERYNGFGALFAMVAKTIAQIPRYVRSAAGVANAVTDCIESATESVASNSTSERRQRRARRVGGIARGARNLVGRIGNLSL</sequence>
<feature type="chain" id="PRO_0000402486" description="Large capsid protein" evidence="1">
    <location>
        <begin position="1"/>
        <end position="536"/>
    </location>
</feature>
<feature type="chain" id="PRO_0000402487" description="Small capsid protein" evidence="1">
    <location>
        <begin position="537"/>
        <end position="612"/>
    </location>
</feature>
<feature type="region of interest" description="Disordered" evidence="2">
    <location>
        <begin position="1"/>
        <end position="53"/>
    </location>
</feature>
<feature type="compositionally biased region" description="Low complexity" evidence="2">
    <location>
        <begin position="11"/>
        <end position="23"/>
    </location>
</feature>
<feature type="compositionally biased region" description="Basic residues" evidence="2">
    <location>
        <begin position="24"/>
        <end position="34"/>
    </location>
</feature>
<feature type="site" description="Cleavage" evidence="1">
    <location>
        <begin position="536"/>
        <end position="537"/>
    </location>
</feature>
<organism>
    <name type="scientific">Nudaurelia capensis beta virus (isolate Pine emperor moth/South Africa)</name>
    <name type="common">NbetaV</name>
    <dbReference type="NCBI Taxonomy" id="652108"/>
    <lineage>
        <taxon>Viruses</taxon>
        <taxon>Riboviria</taxon>
        <taxon>Orthornavirae</taxon>
        <taxon>Kitrinoviricota</taxon>
        <taxon>Alsuviricetes</taxon>
        <taxon>Hepelivirales</taxon>
        <taxon>Alphatetraviridae</taxon>
        <taxon>Betatetravirus</taxon>
        <taxon>Nudaurelia capensis beta virus</taxon>
    </lineage>
</organism>
<evidence type="ECO:0000255" key="1"/>
<evidence type="ECO:0000256" key="2">
    <source>
        <dbReference type="SAM" id="MobiDB-lite"/>
    </source>
</evidence>
<evidence type="ECO:0000269" key="3">
    <source>
    </source>
</evidence>
<evidence type="ECO:0000305" key="4"/>
<name>CAPSD_NCBVS</name>
<comment type="function">
    <text evidence="3">Self-assembles to form an icosahedral capsid with a T=4 symmetry, about 35 nm in diameter, and consisting of 240 copies of the two structural proteins.</text>
</comment>
<comment type="subcellular location">
    <subcellularLocation>
        <location>Virion</location>
    </subcellularLocation>
</comment>
<comment type="similarity">
    <text evidence="4">Belongs to the tetravirus capsid protein family.</text>
</comment>
<reference key="1">
    <citation type="journal article" date="1999" name="Virology">
        <title>Sequence of the genomic RNA of nudaurelia beta virus (Tetraviridae) defines a novel virus genome organization.</title>
        <authorList>
            <person name="Gordon K.H."/>
            <person name="Williams M.R."/>
            <person name="Hendry D.A."/>
            <person name="Hanzlik T.N."/>
        </authorList>
    </citation>
    <scope>NUCLEOTIDE SEQUENCE [GENOMIC RNA]</scope>
</reference>
<reference key="2">
    <citation type="journal article" date="1974" name="J. Gen. Virol.">
        <title>The structure of Nudaurelia capensis beta virus: the first example of a capsid with icosahedral surface symmetry T-4.</title>
        <authorList>
            <person name="Finch J.T."/>
            <person name="Crowther R.A."/>
            <person name="Hendry D.A."/>
            <person name="Struthers J.K."/>
        </authorList>
    </citation>
    <scope>FUNCTION</scope>
</reference>
<protein>
    <recommendedName>
        <fullName>Capsid protein</fullName>
        <shortName>CP</shortName>
    </recommendedName>
    <alternativeName>
        <fullName>Coat protein</fullName>
    </alternativeName>
    <component>
        <recommendedName>
            <fullName>Large capsid protein</fullName>
        </recommendedName>
    </component>
    <component>
        <recommendedName>
            <fullName>Small capsid protein</fullName>
        </recommendedName>
    </component>
</protein>